<protein>
    <recommendedName>
        <fullName evidence="1">Light-independent protochlorophyllide reductase iron-sulfur ATP-binding protein</fullName>
        <shortName evidence="1">DPOR subunit L</shortName>
        <shortName evidence="1">LI-POR subunit L</shortName>
        <ecNumber evidence="1">1.3.7.7</ecNumber>
    </recommendedName>
</protein>
<dbReference type="EC" id="1.3.7.7" evidence="1"/>
<dbReference type="EMBL" id="AB086179">
    <property type="protein sequence ID" value="BAC55411.1"/>
    <property type="molecule type" value="Genomic_DNA"/>
</dbReference>
<dbReference type="EMBL" id="AB087494">
    <property type="protein sequence ID" value="BAC55511.1"/>
    <property type="molecule type" value="mRNA"/>
</dbReference>
<dbReference type="RefSeq" id="NP_777474.1">
    <property type="nucleotide sequence ID" value="NC_004543.1"/>
</dbReference>
<dbReference type="SMR" id="Q85A82"/>
<dbReference type="GeneID" id="2553488"/>
<dbReference type="UniPathway" id="UPA00670"/>
<dbReference type="GO" id="GO:0009507">
    <property type="term" value="C:chloroplast"/>
    <property type="evidence" value="ECO:0007669"/>
    <property type="project" value="UniProtKB-SubCell"/>
</dbReference>
<dbReference type="GO" id="GO:0051539">
    <property type="term" value="F:4 iron, 4 sulfur cluster binding"/>
    <property type="evidence" value="ECO:0007669"/>
    <property type="project" value="UniProtKB-UniRule"/>
</dbReference>
<dbReference type="GO" id="GO:0005524">
    <property type="term" value="F:ATP binding"/>
    <property type="evidence" value="ECO:0007669"/>
    <property type="project" value="UniProtKB-UniRule"/>
</dbReference>
<dbReference type="GO" id="GO:0046872">
    <property type="term" value="F:metal ion binding"/>
    <property type="evidence" value="ECO:0007669"/>
    <property type="project" value="UniProtKB-KW"/>
</dbReference>
<dbReference type="GO" id="GO:0016730">
    <property type="term" value="F:oxidoreductase activity, acting on iron-sulfur proteins as donors"/>
    <property type="evidence" value="ECO:0007669"/>
    <property type="project" value="InterPro"/>
</dbReference>
<dbReference type="GO" id="GO:0016636">
    <property type="term" value="F:oxidoreductase activity, acting on the CH-CH group of donors, iron-sulfur protein as acceptor"/>
    <property type="evidence" value="ECO:0007669"/>
    <property type="project" value="UniProtKB-UniRule"/>
</dbReference>
<dbReference type="GO" id="GO:0036068">
    <property type="term" value="P:light-independent chlorophyll biosynthetic process"/>
    <property type="evidence" value="ECO:0007669"/>
    <property type="project" value="UniProtKB-UniRule"/>
</dbReference>
<dbReference type="GO" id="GO:0019685">
    <property type="term" value="P:photosynthesis, dark reaction"/>
    <property type="evidence" value="ECO:0007669"/>
    <property type="project" value="InterPro"/>
</dbReference>
<dbReference type="CDD" id="cd02032">
    <property type="entry name" value="Bchl-like"/>
    <property type="match status" value="1"/>
</dbReference>
<dbReference type="Gene3D" id="3.40.50.300">
    <property type="entry name" value="P-loop containing nucleotide triphosphate hydrolases"/>
    <property type="match status" value="1"/>
</dbReference>
<dbReference type="HAMAP" id="MF_00355">
    <property type="entry name" value="ChlL_BchL"/>
    <property type="match status" value="1"/>
</dbReference>
<dbReference type="InterPro" id="IPR030655">
    <property type="entry name" value="NifH/chlL_CS"/>
</dbReference>
<dbReference type="InterPro" id="IPR000392">
    <property type="entry name" value="NifH/frxC"/>
</dbReference>
<dbReference type="InterPro" id="IPR027417">
    <property type="entry name" value="P-loop_NTPase"/>
</dbReference>
<dbReference type="InterPro" id="IPR005971">
    <property type="entry name" value="Protochlorophyllide_ATP-bd"/>
</dbReference>
<dbReference type="NCBIfam" id="TIGR01281">
    <property type="entry name" value="DPOR_bchL"/>
    <property type="match status" value="1"/>
</dbReference>
<dbReference type="PANTHER" id="PTHR42864">
    <property type="entry name" value="LIGHT-INDEPENDENT PROTOCHLOROPHYLLIDE REDUCTASE IRON-SULFUR ATP-BINDING PROTEIN"/>
    <property type="match status" value="1"/>
</dbReference>
<dbReference type="PANTHER" id="PTHR42864:SF2">
    <property type="entry name" value="LIGHT-INDEPENDENT PROTOCHLOROPHYLLIDE REDUCTASE IRON-SULFUR ATP-BINDING PROTEIN"/>
    <property type="match status" value="1"/>
</dbReference>
<dbReference type="Pfam" id="PF00142">
    <property type="entry name" value="Fer4_NifH"/>
    <property type="match status" value="1"/>
</dbReference>
<dbReference type="PIRSF" id="PIRSF000363">
    <property type="entry name" value="Nitrogenase_iron"/>
    <property type="match status" value="1"/>
</dbReference>
<dbReference type="PRINTS" id="PR00091">
    <property type="entry name" value="NITROGNASEII"/>
</dbReference>
<dbReference type="SUPFAM" id="SSF52540">
    <property type="entry name" value="P-loop containing nucleoside triphosphate hydrolases"/>
    <property type="match status" value="1"/>
</dbReference>
<dbReference type="PROSITE" id="PS00746">
    <property type="entry name" value="NIFH_FRXC_1"/>
    <property type="match status" value="1"/>
</dbReference>
<dbReference type="PROSITE" id="PS51026">
    <property type="entry name" value="NIFH_FRXC_3"/>
    <property type="match status" value="1"/>
</dbReference>
<reference key="1">
    <citation type="journal article" date="2003" name="Nucleic Acids Res.">
        <title>The complete nucleotide sequence of the hornwort (Anthoceros formosae) chloroplast genome: insight into the earliest land plants.</title>
        <authorList>
            <person name="Kugita M."/>
            <person name="Kaneko A."/>
            <person name="Yamamoto Y."/>
            <person name="Takeya Y."/>
            <person name="Matsumoto T."/>
            <person name="Yoshinaga K."/>
        </authorList>
    </citation>
    <scope>NUCLEOTIDE SEQUENCE [LARGE SCALE GENOMIC DNA]</scope>
    <scope>RNA EDITING</scope>
</reference>
<reference key="2">
    <citation type="journal article" date="2003" name="Nucleic Acids Res.">
        <title>RNA editing in hornwort chloroplasts makes more than half the genes functional.</title>
        <authorList>
            <person name="Kugita M."/>
            <person name="Yamamoto Y."/>
            <person name="Fujikawa T."/>
            <person name="Matsumoto T."/>
            <person name="Yoshinaga K."/>
        </authorList>
    </citation>
    <scope>NUCLEOTIDE SEQUENCE [MRNA]</scope>
    <scope>RNA EDITING</scope>
    <source>
        <tissue>Thallus</tissue>
    </source>
</reference>
<name>CHLL_ANTAG</name>
<keyword id="KW-0004">4Fe-4S</keyword>
<keyword id="KW-0067">ATP-binding</keyword>
<keyword id="KW-0149">Chlorophyll biosynthesis</keyword>
<keyword id="KW-0150">Chloroplast</keyword>
<keyword id="KW-0408">Iron</keyword>
<keyword id="KW-0411">Iron-sulfur</keyword>
<keyword id="KW-0460">Magnesium</keyword>
<keyword id="KW-0479">Metal-binding</keyword>
<keyword id="KW-0547">Nucleotide-binding</keyword>
<keyword id="KW-0560">Oxidoreductase</keyword>
<keyword id="KW-0602">Photosynthesis</keyword>
<keyword id="KW-0934">Plastid</keyword>
<keyword id="KW-0691">RNA editing</keyword>
<accession>Q85A82</accession>
<evidence type="ECO:0000255" key="1">
    <source>
        <dbReference type="HAMAP-Rule" id="MF_00355"/>
    </source>
</evidence>
<evidence type="ECO:0000269" key="2">
    <source>
    </source>
</evidence>
<evidence type="ECO:0000269" key="3">
    <source>
    </source>
</evidence>
<sequence>MKIAVYGKGGIGKSTTSCNTSIASARRGKRVLQIGCDPKHDSTFTLTGSLIPTIIDTSQSKDYHYEDVWPEDVIYKGYGGVDCVEVGGPPAGAGCGGYVVGETVKLLKELNAFYEYDIILFDVSGDVVCGGFVVLLNYADYCIIITDNGFDALFAVNCIAASVREKARTHSLRLAGSVGNRTSKRDLINRYVEACPMPVLEVSLLIEDIRVSRVKGKTSFEMVEFQPFLNYVCEFYLNIADQILSQPEGVIPKEIPDRELFSLLSDFYLNPTNNERENKNQETLLDFMII</sequence>
<proteinExistence type="evidence at transcript level"/>
<feature type="chain" id="PRO_0000139551" description="Light-independent protochlorophyllide reductase iron-sulfur ATP-binding protein">
    <location>
        <begin position="1"/>
        <end position="290"/>
    </location>
</feature>
<feature type="binding site" evidence="1">
    <location>
        <begin position="10"/>
        <end position="15"/>
    </location>
    <ligand>
        <name>ATP</name>
        <dbReference type="ChEBI" id="CHEBI:30616"/>
    </ligand>
</feature>
<feature type="binding site" evidence="1">
    <location>
        <position position="14"/>
    </location>
    <ligand>
        <name>Mg(2+)</name>
        <dbReference type="ChEBI" id="CHEBI:18420"/>
    </ligand>
</feature>
<feature type="binding site" evidence="1">
    <location>
        <position position="39"/>
    </location>
    <ligand>
        <name>ATP</name>
        <dbReference type="ChEBI" id="CHEBI:30616"/>
    </ligand>
</feature>
<feature type="binding site" evidence="1">
    <location>
        <position position="95"/>
    </location>
    <ligand>
        <name>[4Fe-4S] cluster</name>
        <dbReference type="ChEBI" id="CHEBI:49883"/>
        <note>ligand shared between dimeric partners</note>
    </ligand>
</feature>
<feature type="binding site" evidence="1">
    <location>
        <position position="129"/>
    </location>
    <ligand>
        <name>[4Fe-4S] cluster</name>
        <dbReference type="ChEBI" id="CHEBI:49883"/>
        <note>ligand shared between dimeric partners</note>
    </ligand>
</feature>
<feature type="binding site" evidence="1">
    <location>
        <begin position="180"/>
        <end position="181"/>
    </location>
    <ligand>
        <name>ATP</name>
        <dbReference type="ChEBI" id="CHEBI:30616"/>
    </ligand>
</feature>
<gene>
    <name evidence="1" type="primary">chlL</name>
</gene>
<organism>
    <name type="scientific">Anthoceros angustus</name>
    <name type="common">Hornwort</name>
    <name type="synonym">Anthoceros formosae</name>
    <dbReference type="NCBI Taxonomy" id="48387"/>
    <lineage>
        <taxon>Eukaryota</taxon>
        <taxon>Viridiplantae</taxon>
        <taxon>Streptophyta</taxon>
        <taxon>Embryophyta</taxon>
        <taxon>Anthocerotophyta</taxon>
        <taxon>Anthocerotopsida</taxon>
        <taxon>Anthocerotidae</taxon>
        <taxon>Anthocerotales</taxon>
        <taxon>Anthocerotaceae</taxon>
        <taxon>Anthoceros</taxon>
    </lineage>
</organism>
<geneLocation type="chloroplast"/>
<comment type="function">
    <text evidence="1">Component of the dark-operative protochlorophyllide reductase (DPOR) that uses Mg-ATP and reduced ferredoxin to reduce ring D of protochlorophyllide (Pchlide) to form chlorophyllide a (Chlide). This reaction is light-independent. The L component serves as a unique electron donor to the NB-component of the complex, and binds Mg-ATP.</text>
</comment>
<comment type="catalytic activity">
    <reaction evidence="1">
        <text>chlorophyllide a + oxidized 2[4Fe-4S]-[ferredoxin] + 2 ADP + 2 phosphate = protochlorophyllide a + reduced 2[4Fe-4S]-[ferredoxin] + 2 ATP + 2 H2O</text>
        <dbReference type="Rhea" id="RHEA:28202"/>
        <dbReference type="Rhea" id="RHEA-COMP:10002"/>
        <dbReference type="Rhea" id="RHEA-COMP:10004"/>
        <dbReference type="ChEBI" id="CHEBI:15377"/>
        <dbReference type="ChEBI" id="CHEBI:30616"/>
        <dbReference type="ChEBI" id="CHEBI:33722"/>
        <dbReference type="ChEBI" id="CHEBI:33723"/>
        <dbReference type="ChEBI" id="CHEBI:43474"/>
        <dbReference type="ChEBI" id="CHEBI:83348"/>
        <dbReference type="ChEBI" id="CHEBI:83350"/>
        <dbReference type="ChEBI" id="CHEBI:456216"/>
        <dbReference type="EC" id="1.3.7.7"/>
    </reaction>
</comment>
<comment type="cofactor">
    <cofactor evidence="1">
        <name>[4Fe-4S] cluster</name>
        <dbReference type="ChEBI" id="CHEBI:49883"/>
    </cofactor>
    <text evidence="1">Binds 1 [4Fe-4S] cluster per dimer.</text>
</comment>
<comment type="pathway">
    <text evidence="1">Porphyrin-containing compound metabolism; chlorophyll biosynthesis (light-independent).</text>
</comment>
<comment type="subunit">
    <text evidence="1">Homodimer. Protochlorophyllide reductase is composed of three subunits; ChlL, ChlN and ChlB.</text>
</comment>
<comment type="subcellular location">
    <subcellularLocation>
        <location>Plastid</location>
        <location>Chloroplast</location>
    </subcellularLocation>
</comment>
<comment type="RNA editing">
    <location>
        <position position="20" evidence="2 3"/>
    </location>
    <location>
        <position position="24" evidence="2 3"/>
    </location>
    <location>
        <position position="49" evidence="2 3"/>
    </location>
    <location>
        <position position="58" evidence="2 3"/>
    </location>
    <location>
        <position position="86" evidence="2 3"/>
    </location>
    <location>
        <position position="124" evidence="2 3"/>
    </location>
    <location>
        <position position="133" evidence="2 3"/>
    </location>
    <location>
        <position position="134" evidence="2 3"/>
    </location>
    <location>
        <position position="135" evidence="2 3"/>
    </location>
    <location>
        <position position="156" evidence="2 3"/>
    </location>
    <location>
        <position position="158" evidence="2 3"/>
    </location>
    <location>
        <position position="171" evidence="2 3"/>
    </location>
    <location>
        <position position="177" evidence="2 3"/>
    </location>
    <location>
        <position position="203" evidence="2 3"/>
    </location>
    <location>
        <position position="204" evidence="2 3"/>
    </location>
    <location>
        <position position="219" evidence="2 3"/>
    </location>
</comment>
<comment type="similarity">
    <text evidence="1">Belongs to the NifH/BchL/ChlL family.</text>
</comment>